<sequence length="408" mass="44923">MDKLLERFLNYVSLDTQSKAGVRQVPSTEGQWKLLHLLKEQLEEMGLINVTLSEKGTLMATLPANVPGDIPAIGFISHVDTSPDCSGKNVNPQIVENYRGGDIALGIGDEVLSPVMFPVLHQLLGQTLITTDGKTLLGADDKAGIAEIMTALAVLQQKKIPHGDIRVAFTPDEEVGKGAKHFDVDAFDARWAYTVDGGGVGELEFENFNAASVNIKIVGNNVHPGTAKGVMVNALSLAARIHAEVPADESPEMTEGYEGFYHLASMKGTVERADMHYIIRDFDRKQFEARKRKMMEIAKKVGKGLHPDCYIELVIEDSYYNMREKVVEHPHILDIAQQAMRDCDIEPELKPIRGGTDGAQLSFMGLPCPNLFTGGYNYHGKHEFVTLEGMEKAVQVIVRIAELTAQRK</sequence>
<gene>
    <name evidence="1" type="primary">pepT</name>
    <name type="ordered locus">ECDH10B_1199</name>
</gene>
<organism>
    <name type="scientific">Escherichia coli (strain K12 / DH10B)</name>
    <dbReference type="NCBI Taxonomy" id="316385"/>
    <lineage>
        <taxon>Bacteria</taxon>
        <taxon>Pseudomonadati</taxon>
        <taxon>Pseudomonadota</taxon>
        <taxon>Gammaproteobacteria</taxon>
        <taxon>Enterobacterales</taxon>
        <taxon>Enterobacteriaceae</taxon>
        <taxon>Escherichia</taxon>
    </lineage>
</organism>
<proteinExistence type="inferred from homology"/>
<evidence type="ECO:0000255" key="1">
    <source>
        <dbReference type="HAMAP-Rule" id="MF_00550"/>
    </source>
</evidence>
<reference key="1">
    <citation type="journal article" date="2008" name="J. Bacteriol.">
        <title>The complete genome sequence of Escherichia coli DH10B: insights into the biology of a laboratory workhorse.</title>
        <authorList>
            <person name="Durfee T."/>
            <person name="Nelson R."/>
            <person name="Baldwin S."/>
            <person name="Plunkett G. III"/>
            <person name="Burland V."/>
            <person name="Mau B."/>
            <person name="Petrosino J.F."/>
            <person name="Qin X."/>
            <person name="Muzny D.M."/>
            <person name="Ayele M."/>
            <person name="Gibbs R.A."/>
            <person name="Csorgo B."/>
            <person name="Posfai G."/>
            <person name="Weinstock G.M."/>
            <person name="Blattner F.R."/>
        </authorList>
    </citation>
    <scope>NUCLEOTIDE SEQUENCE [LARGE SCALE GENOMIC DNA]</scope>
    <source>
        <strain>K12 / DH10B</strain>
    </source>
</reference>
<comment type="function">
    <text evidence="1">Cleaves the N-terminal amino acid of tripeptides.</text>
</comment>
<comment type="catalytic activity">
    <reaction evidence="1">
        <text>Release of the N-terminal residue from a tripeptide.</text>
        <dbReference type="EC" id="3.4.11.4"/>
    </reaction>
</comment>
<comment type="cofactor">
    <cofactor evidence="1">
        <name>Zn(2+)</name>
        <dbReference type="ChEBI" id="CHEBI:29105"/>
    </cofactor>
    <text evidence="1">Binds 2 Zn(2+) ions per subunit.</text>
</comment>
<comment type="subcellular location">
    <subcellularLocation>
        <location evidence="1">Cytoplasm</location>
    </subcellularLocation>
</comment>
<comment type="similarity">
    <text evidence="1">Belongs to the peptidase M20B family.</text>
</comment>
<protein>
    <recommendedName>
        <fullName evidence="1">Peptidase T</fullName>
        <ecNumber evidence="1">3.4.11.4</ecNumber>
    </recommendedName>
    <alternativeName>
        <fullName evidence="1">Aminotripeptidase</fullName>
        <shortName evidence="1">Tripeptidase</shortName>
    </alternativeName>
    <alternativeName>
        <fullName evidence="1">Tripeptide aminopeptidase</fullName>
    </alternativeName>
</protein>
<accession>B1XA37</accession>
<keyword id="KW-0031">Aminopeptidase</keyword>
<keyword id="KW-0963">Cytoplasm</keyword>
<keyword id="KW-0378">Hydrolase</keyword>
<keyword id="KW-0479">Metal-binding</keyword>
<keyword id="KW-0482">Metalloprotease</keyword>
<keyword id="KW-0645">Protease</keyword>
<keyword id="KW-0862">Zinc</keyword>
<dbReference type="EC" id="3.4.11.4" evidence="1"/>
<dbReference type="EMBL" id="CP000948">
    <property type="protein sequence ID" value="ACB02320.1"/>
    <property type="molecule type" value="Genomic_DNA"/>
</dbReference>
<dbReference type="RefSeq" id="WP_000359434.1">
    <property type="nucleotide sequence ID" value="NC_010473.1"/>
</dbReference>
<dbReference type="SMR" id="B1XA37"/>
<dbReference type="MEROPS" id="M20.003"/>
<dbReference type="KEGG" id="ecd:ECDH10B_1199"/>
<dbReference type="HOGENOM" id="CLU_053676_0_0_6"/>
<dbReference type="GO" id="GO:0005829">
    <property type="term" value="C:cytosol"/>
    <property type="evidence" value="ECO:0007669"/>
    <property type="project" value="TreeGrafter"/>
</dbReference>
<dbReference type="GO" id="GO:0008237">
    <property type="term" value="F:metallopeptidase activity"/>
    <property type="evidence" value="ECO:0007669"/>
    <property type="project" value="UniProtKB-KW"/>
</dbReference>
<dbReference type="GO" id="GO:0045148">
    <property type="term" value="F:tripeptide aminopeptidase activity"/>
    <property type="evidence" value="ECO:0007669"/>
    <property type="project" value="UniProtKB-UniRule"/>
</dbReference>
<dbReference type="GO" id="GO:0008270">
    <property type="term" value="F:zinc ion binding"/>
    <property type="evidence" value="ECO:0007669"/>
    <property type="project" value="UniProtKB-UniRule"/>
</dbReference>
<dbReference type="GO" id="GO:0043171">
    <property type="term" value="P:peptide catabolic process"/>
    <property type="evidence" value="ECO:0007669"/>
    <property type="project" value="UniProtKB-UniRule"/>
</dbReference>
<dbReference type="GO" id="GO:0006508">
    <property type="term" value="P:proteolysis"/>
    <property type="evidence" value="ECO:0007669"/>
    <property type="project" value="UniProtKB-UniRule"/>
</dbReference>
<dbReference type="CDD" id="cd03892">
    <property type="entry name" value="M20_peptT"/>
    <property type="match status" value="1"/>
</dbReference>
<dbReference type="FunFam" id="3.30.70.360:FF:000002">
    <property type="entry name" value="Peptidase T"/>
    <property type="match status" value="1"/>
</dbReference>
<dbReference type="Gene3D" id="3.30.70.360">
    <property type="match status" value="1"/>
</dbReference>
<dbReference type="Gene3D" id="3.40.630.10">
    <property type="entry name" value="Zn peptidases"/>
    <property type="match status" value="1"/>
</dbReference>
<dbReference type="HAMAP" id="MF_00550">
    <property type="entry name" value="Aminopeptidase_M20"/>
    <property type="match status" value="1"/>
</dbReference>
<dbReference type="InterPro" id="IPR001261">
    <property type="entry name" value="ArgE/DapE_CS"/>
</dbReference>
<dbReference type="InterPro" id="IPR036264">
    <property type="entry name" value="Bact_exopeptidase_dim_dom"/>
</dbReference>
<dbReference type="InterPro" id="IPR002933">
    <property type="entry name" value="Peptidase_M20"/>
</dbReference>
<dbReference type="InterPro" id="IPR011650">
    <property type="entry name" value="Peptidase_M20_dimer"/>
</dbReference>
<dbReference type="InterPro" id="IPR010161">
    <property type="entry name" value="Peptidase_M20B"/>
</dbReference>
<dbReference type="NCBIfam" id="TIGR01882">
    <property type="entry name" value="peptidase-T"/>
    <property type="match status" value="1"/>
</dbReference>
<dbReference type="NCBIfam" id="NF003976">
    <property type="entry name" value="PRK05469.1"/>
    <property type="match status" value="1"/>
</dbReference>
<dbReference type="NCBIfam" id="NF009920">
    <property type="entry name" value="PRK13381.1"/>
    <property type="match status" value="1"/>
</dbReference>
<dbReference type="PANTHER" id="PTHR42994">
    <property type="entry name" value="PEPTIDASE T"/>
    <property type="match status" value="1"/>
</dbReference>
<dbReference type="PANTHER" id="PTHR42994:SF1">
    <property type="entry name" value="PEPTIDASE T"/>
    <property type="match status" value="1"/>
</dbReference>
<dbReference type="Pfam" id="PF07687">
    <property type="entry name" value="M20_dimer"/>
    <property type="match status" value="1"/>
</dbReference>
<dbReference type="Pfam" id="PF01546">
    <property type="entry name" value="Peptidase_M20"/>
    <property type="match status" value="1"/>
</dbReference>
<dbReference type="PIRSF" id="PIRSF037215">
    <property type="entry name" value="Peptidase_M20B"/>
    <property type="match status" value="1"/>
</dbReference>
<dbReference type="SUPFAM" id="SSF55031">
    <property type="entry name" value="Bacterial exopeptidase dimerisation domain"/>
    <property type="match status" value="1"/>
</dbReference>
<dbReference type="SUPFAM" id="SSF53187">
    <property type="entry name" value="Zn-dependent exopeptidases"/>
    <property type="match status" value="1"/>
</dbReference>
<dbReference type="PROSITE" id="PS00758">
    <property type="entry name" value="ARGE_DAPE_CPG2_1"/>
    <property type="match status" value="1"/>
</dbReference>
<dbReference type="PROSITE" id="PS00759">
    <property type="entry name" value="ARGE_DAPE_CPG2_2"/>
    <property type="match status" value="1"/>
</dbReference>
<name>PEPT_ECODH</name>
<feature type="chain" id="PRO_1000129029" description="Peptidase T">
    <location>
        <begin position="1"/>
        <end position="408"/>
    </location>
</feature>
<feature type="active site" evidence="1">
    <location>
        <position position="80"/>
    </location>
</feature>
<feature type="active site" description="Proton acceptor" evidence="1">
    <location>
        <position position="173"/>
    </location>
</feature>
<feature type="binding site" evidence="1">
    <location>
        <position position="78"/>
    </location>
    <ligand>
        <name>Zn(2+)</name>
        <dbReference type="ChEBI" id="CHEBI:29105"/>
        <label>1</label>
    </ligand>
</feature>
<feature type="binding site" evidence="1">
    <location>
        <position position="140"/>
    </location>
    <ligand>
        <name>Zn(2+)</name>
        <dbReference type="ChEBI" id="CHEBI:29105"/>
        <label>1</label>
    </ligand>
</feature>
<feature type="binding site" evidence="1">
    <location>
        <position position="140"/>
    </location>
    <ligand>
        <name>Zn(2+)</name>
        <dbReference type="ChEBI" id="CHEBI:29105"/>
        <label>2</label>
    </ligand>
</feature>
<feature type="binding site" evidence="1">
    <location>
        <position position="174"/>
    </location>
    <ligand>
        <name>Zn(2+)</name>
        <dbReference type="ChEBI" id="CHEBI:29105"/>
        <label>2</label>
    </ligand>
</feature>
<feature type="binding site" evidence="1">
    <location>
        <position position="196"/>
    </location>
    <ligand>
        <name>Zn(2+)</name>
        <dbReference type="ChEBI" id="CHEBI:29105"/>
        <label>1</label>
    </ligand>
</feature>
<feature type="binding site" evidence="1">
    <location>
        <position position="379"/>
    </location>
    <ligand>
        <name>Zn(2+)</name>
        <dbReference type="ChEBI" id="CHEBI:29105"/>
        <label>2</label>
    </ligand>
</feature>